<accession>Q5L0J4</accession>
<protein>
    <recommendedName>
        <fullName evidence="1">Proline--tRNA ligase</fullName>
        <ecNumber evidence="1">6.1.1.15</ecNumber>
    </recommendedName>
    <alternativeName>
        <fullName evidence="1">Prolyl-tRNA synthetase</fullName>
        <shortName evidence="1">ProRS</shortName>
    </alternativeName>
</protein>
<sequence>MRQSQAFIPTLREVPADAEVKSHQLLLRAGFIRQSASGVYTFLPLGQRVLQKVEAIIREEMNRIGAMELFMPALQPAELWQQSGRWYSYGPELMRLKDRHERDFALGPTHEEMITAIVRDEVKTYKRLPLVLYQIQTKFRDEKRPRFGLLRGREFMMKDAYSFHTSKESLDETYNNMYEAYANIFRRCGLNFRAVIADSGAIGGKDTHEFMVLSDIGEDTIAYSDASDYAANIEMAPVVATYEKSDEPPAELKKVATPGQKTIAEVASHLQISPERCIKSLLFNVDGRYVLVLVRGDHEANEVKVKNVLDATVVELATPEETERVMNAPIGSLGPIGVSEDVTVIADHAVAAITNGVCGANEEGYHYIGVNPGRDFAVSQYADLRFVKEGDPSPDGKGTIRFARGIEVGHVFKLGTKYSEAMNAVYLDENGQTQTMIMGCYGIGVSRLVAAIAEQFADEHGLVWPASVAPFHIHLLTANAKSDEQRALAEEWYEKLGQAGFEVLYDDRPERAGVKFADSDLIGIPLRVTVGKRAGEGVVEVKVRKTGETFDVPVSELVDTARRLLQS</sequence>
<dbReference type="EC" id="6.1.1.15" evidence="1"/>
<dbReference type="EMBL" id="BA000043">
    <property type="protein sequence ID" value="BAD75542.1"/>
    <property type="molecule type" value="Genomic_DNA"/>
</dbReference>
<dbReference type="RefSeq" id="WP_011230757.1">
    <property type="nucleotide sequence ID" value="NC_006510.1"/>
</dbReference>
<dbReference type="SMR" id="Q5L0J4"/>
<dbReference type="STRING" id="235909.GK1257"/>
<dbReference type="KEGG" id="gka:GK1257"/>
<dbReference type="eggNOG" id="COG0442">
    <property type="taxonomic scope" value="Bacteria"/>
</dbReference>
<dbReference type="HOGENOM" id="CLU_016739_0_0_9"/>
<dbReference type="Proteomes" id="UP000001172">
    <property type="component" value="Chromosome"/>
</dbReference>
<dbReference type="GO" id="GO:0005829">
    <property type="term" value="C:cytosol"/>
    <property type="evidence" value="ECO:0007669"/>
    <property type="project" value="TreeGrafter"/>
</dbReference>
<dbReference type="GO" id="GO:0002161">
    <property type="term" value="F:aminoacyl-tRNA deacylase activity"/>
    <property type="evidence" value="ECO:0007669"/>
    <property type="project" value="InterPro"/>
</dbReference>
<dbReference type="GO" id="GO:0005524">
    <property type="term" value="F:ATP binding"/>
    <property type="evidence" value="ECO:0007669"/>
    <property type="project" value="UniProtKB-UniRule"/>
</dbReference>
<dbReference type="GO" id="GO:0140096">
    <property type="term" value="F:catalytic activity, acting on a protein"/>
    <property type="evidence" value="ECO:0007669"/>
    <property type="project" value="UniProtKB-ARBA"/>
</dbReference>
<dbReference type="GO" id="GO:0004827">
    <property type="term" value="F:proline-tRNA ligase activity"/>
    <property type="evidence" value="ECO:0007669"/>
    <property type="project" value="UniProtKB-UniRule"/>
</dbReference>
<dbReference type="GO" id="GO:0016740">
    <property type="term" value="F:transferase activity"/>
    <property type="evidence" value="ECO:0007669"/>
    <property type="project" value="UniProtKB-ARBA"/>
</dbReference>
<dbReference type="GO" id="GO:0006433">
    <property type="term" value="P:prolyl-tRNA aminoacylation"/>
    <property type="evidence" value="ECO:0007669"/>
    <property type="project" value="UniProtKB-UniRule"/>
</dbReference>
<dbReference type="CDD" id="cd04334">
    <property type="entry name" value="ProRS-INS"/>
    <property type="match status" value="1"/>
</dbReference>
<dbReference type="CDD" id="cd00861">
    <property type="entry name" value="ProRS_anticodon_short"/>
    <property type="match status" value="1"/>
</dbReference>
<dbReference type="CDD" id="cd00779">
    <property type="entry name" value="ProRS_core_prok"/>
    <property type="match status" value="1"/>
</dbReference>
<dbReference type="FunFam" id="3.30.930.10:FF:000043">
    <property type="entry name" value="Proline--tRNA ligase"/>
    <property type="match status" value="1"/>
</dbReference>
<dbReference type="FunFam" id="3.30.930.10:FF:000062">
    <property type="entry name" value="Proline--tRNA ligase"/>
    <property type="match status" value="1"/>
</dbReference>
<dbReference type="FunFam" id="3.40.50.800:FF:000011">
    <property type="entry name" value="Proline--tRNA ligase"/>
    <property type="match status" value="1"/>
</dbReference>
<dbReference type="Gene3D" id="3.40.50.800">
    <property type="entry name" value="Anticodon-binding domain"/>
    <property type="match status" value="1"/>
</dbReference>
<dbReference type="Gene3D" id="3.30.930.10">
    <property type="entry name" value="Bira Bifunctional Protein, Domain 2"/>
    <property type="match status" value="2"/>
</dbReference>
<dbReference type="Gene3D" id="3.90.960.10">
    <property type="entry name" value="YbaK/aminoacyl-tRNA synthetase-associated domain"/>
    <property type="match status" value="1"/>
</dbReference>
<dbReference type="HAMAP" id="MF_01569">
    <property type="entry name" value="Pro_tRNA_synth_type1"/>
    <property type="match status" value="1"/>
</dbReference>
<dbReference type="InterPro" id="IPR002314">
    <property type="entry name" value="aa-tRNA-synt_IIb"/>
</dbReference>
<dbReference type="InterPro" id="IPR006195">
    <property type="entry name" value="aa-tRNA-synth_II"/>
</dbReference>
<dbReference type="InterPro" id="IPR045864">
    <property type="entry name" value="aa-tRNA-synth_II/BPL/LPL"/>
</dbReference>
<dbReference type="InterPro" id="IPR004154">
    <property type="entry name" value="Anticodon-bd"/>
</dbReference>
<dbReference type="InterPro" id="IPR036621">
    <property type="entry name" value="Anticodon-bd_dom_sf"/>
</dbReference>
<dbReference type="InterPro" id="IPR002316">
    <property type="entry name" value="Pro-tRNA-ligase_IIa"/>
</dbReference>
<dbReference type="InterPro" id="IPR004500">
    <property type="entry name" value="Pro-tRNA-synth_IIa_bac-type"/>
</dbReference>
<dbReference type="InterPro" id="IPR023717">
    <property type="entry name" value="Pro-tRNA-Synthase_IIa_type1"/>
</dbReference>
<dbReference type="InterPro" id="IPR050062">
    <property type="entry name" value="Pro-tRNA_synthetase"/>
</dbReference>
<dbReference type="InterPro" id="IPR044140">
    <property type="entry name" value="ProRS_anticodon_short"/>
</dbReference>
<dbReference type="InterPro" id="IPR033730">
    <property type="entry name" value="ProRS_core_prok"/>
</dbReference>
<dbReference type="InterPro" id="IPR036754">
    <property type="entry name" value="YbaK/aa-tRNA-synt-asso_dom_sf"/>
</dbReference>
<dbReference type="InterPro" id="IPR007214">
    <property type="entry name" value="YbaK/aa-tRNA-synth-assoc-dom"/>
</dbReference>
<dbReference type="NCBIfam" id="NF006625">
    <property type="entry name" value="PRK09194.1"/>
    <property type="match status" value="1"/>
</dbReference>
<dbReference type="NCBIfam" id="TIGR00409">
    <property type="entry name" value="proS_fam_II"/>
    <property type="match status" value="1"/>
</dbReference>
<dbReference type="PANTHER" id="PTHR42753">
    <property type="entry name" value="MITOCHONDRIAL RIBOSOME PROTEIN L39/PROLYL-TRNA LIGASE FAMILY MEMBER"/>
    <property type="match status" value="1"/>
</dbReference>
<dbReference type="PANTHER" id="PTHR42753:SF2">
    <property type="entry name" value="PROLINE--TRNA LIGASE"/>
    <property type="match status" value="1"/>
</dbReference>
<dbReference type="Pfam" id="PF03129">
    <property type="entry name" value="HGTP_anticodon"/>
    <property type="match status" value="1"/>
</dbReference>
<dbReference type="Pfam" id="PF00587">
    <property type="entry name" value="tRNA-synt_2b"/>
    <property type="match status" value="1"/>
</dbReference>
<dbReference type="Pfam" id="PF04073">
    <property type="entry name" value="tRNA_edit"/>
    <property type="match status" value="1"/>
</dbReference>
<dbReference type="PIRSF" id="PIRSF001535">
    <property type="entry name" value="ProRS_1"/>
    <property type="match status" value="1"/>
</dbReference>
<dbReference type="PRINTS" id="PR01046">
    <property type="entry name" value="TRNASYNTHPRO"/>
</dbReference>
<dbReference type="SUPFAM" id="SSF52954">
    <property type="entry name" value="Class II aaRS ABD-related"/>
    <property type="match status" value="1"/>
</dbReference>
<dbReference type="SUPFAM" id="SSF55681">
    <property type="entry name" value="Class II aaRS and biotin synthetases"/>
    <property type="match status" value="1"/>
</dbReference>
<dbReference type="SUPFAM" id="SSF55826">
    <property type="entry name" value="YbaK/ProRS associated domain"/>
    <property type="match status" value="1"/>
</dbReference>
<dbReference type="PROSITE" id="PS50862">
    <property type="entry name" value="AA_TRNA_LIGASE_II"/>
    <property type="match status" value="1"/>
</dbReference>
<gene>
    <name evidence="1" type="primary">proS</name>
    <name type="ordered locus">GK1257</name>
</gene>
<evidence type="ECO:0000255" key="1">
    <source>
        <dbReference type="HAMAP-Rule" id="MF_01569"/>
    </source>
</evidence>
<reference key="1">
    <citation type="journal article" date="2004" name="Nucleic Acids Res.">
        <title>Thermoadaptation trait revealed by the genome sequence of thermophilic Geobacillus kaustophilus.</title>
        <authorList>
            <person name="Takami H."/>
            <person name="Takaki Y."/>
            <person name="Chee G.-J."/>
            <person name="Nishi S."/>
            <person name="Shimamura S."/>
            <person name="Suzuki H."/>
            <person name="Matsui S."/>
            <person name="Uchiyama I."/>
        </authorList>
    </citation>
    <scope>NUCLEOTIDE SEQUENCE [LARGE SCALE GENOMIC DNA]</scope>
    <source>
        <strain>HTA426</strain>
    </source>
</reference>
<name>SYP_GEOKA</name>
<proteinExistence type="inferred from homology"/>
<feature type="chain" id="PRO_0000248696" description="Proline--tRNA ligase">
    <location>
        <begin position="1"/>
        <end position="567"/>
    </location>
</feature>
<comment type="function">
    <text evidence="1">Catalyzes the attachment of proline to tRNA(Pro) in a two-step reaction: proline is first activated by ATP to form Pro-AMP and then transferred to the acceptor end of tRNA(Pro). As ProRS can inadvertently accommodate and process non-cognate amino acids such as alanine and cysteine, to avoid such errors it has two additional distinct editing activities against alanine. One activity is designated as 'pretransfer' editing and involves the tRNA(Pro)-independent hydrolysis of activated Ala-AMP. The other activity is designated 'posttransfer' editing and involves deacylation of mischarged Ala-tRNA(Pro). The misacylated Cys-tRNA(Pro) is not edited by ProRS.</text>
</comment>
<comment type="catalytic activity">
    <reaction evidence="1">
        <text>tRNA(Pro) + L-proline + ATP = L-prolyl-tRNA(Pro) + AMP + diphosphate</text>
        <dbReference type="Rhea" id="RHEA:14305"/>
        <dbReference type="Rhea" id="RHEA-COMP:9700"/>
        <dbReference type="Rhea" id="RHEA-COMP:9702"/>
        <dbReference type="ChEBI" id="CHEBI:30616"/>
        <dbReference type="ChEBI" id="CHEBI:33019"/>
        <dbReference type="ChEBI" id="CHEBI:60039"/>
        <dbReference type="ChEBI" id="CHEBI:78442"/>
        <dbReference type="ChEBI" id="CHEBI:78532"/>
        <dbReference type="ChEBI" id="CHEBI:456215"/>
        <dbReference type="EC" id="6.1.1.15"/>
    </reaction>
</comment>
<comment type="subunit">
    <text evidence="1">Homodimer.</text>
</comment>
<comment type="subcellular location">
    <subcellularLocation>
        <location evidence="1">Cytoplasm</location>
    </subcellularLocation>
</comment>
<comment type="domain">
    <text evidence="1">Consists of three domains: the N-terminal catalytic domain, the editing domain and the C-terminal anticodon-binding domain.</text>
</comment>
<comment type="similarity">
    <text evidence="1">Belongs to the class-II aminoacyl-tRNA synthetase family. ProS type 1 subfamily.</text>
</comment>
<keyword id="KW-0030">Aminoacyl-tRNA synthetase</keyword>
<keyword id="KW-0067">ATP-binding</keyword>
<keyword id="KW-0963">Cytoplasm</keyword>
<keyword id="KW-0436">Ligase</keyword>
<keyword id="KW-0547">Nucleotide-binding</keyword>
<keyword id="KW-0648">Protein biosynthesis</keyword>
<keyword id="KW-1185">Reference proteome</keyword>
<organism>
    <name type="scientific">Geobacillus kaustophilus (strain HTA426)</name>
    <dbReference type="NCBI Taxonomy" id="235909"/>
    <lineage>
        <taxon>Bacteria</taxon>
        <taxon>Bacillati</taxon>
        <taxon>Bacillota</taxon>
        <taxon>Bacilli</taxon>
        <taxon>Bacillales</taxon>
        <taxon>Anoxybacillaceae</taxon>
        <taxon>Geobacillus</taxon>
        <taxon>Geobacillus thermoleovorans group</taxon>
    </lineage>
</organism>